<name>CWC25_CRYNB</name>
<keyword id="KW-0175">Coiled coil</keyword>
<keyword id="KW-0507">mRNA processing</keyword>
<keyword id="KW-0508">mRNA splicing</keyword>
<keyword id="KW-0539">Nucleus</keyword>
<keyword id="KW-0747">Spliceosome</keyword>
<protein>
    <recommendedName>
        <fullName>Pre-mRNA-splicing factor CWC25</fullName>
    </recommendedName>
</protein>
<evidence type="ECO:0000250" key="1"/>
<evidence type="ECO:0000255" key="2"/>
<evidence type="ECO:0000256" key="3">
    <source>
        <dbReference type="SAM" id="MobiDB-lite"/>
    </source>
</evidence>
<evidence type="ECO:0000305" key="4"/>
<feature type="chain" id="PRO_0000410053" description="Pre-mRNA-splicing factor CWC25">
    <location>
        <begin position="1"/>
        <end position="434"/>
    </location>
</feature>
<feature type="region of interest" description="Disordered" evidence="3">
    <location>
        <begin position="43"/>
        <end position="63"/>
    </location>
</feature>
<feature type="region of interest" description="Disordered" evidence="3">
    <location>
        <begin position="156"/>
        <end position="412"/>
    </location>
</feature>
<feature type="coiled-coil region" evidence="2">
    <location>
        <begin position="20"/>
        <end position="61"/>
    </location>
</feature>
<feature type="compositionally biased region" description="Basic and acidic residues" evidence="3">
    <location>
        <begin position="43"/>
        <end position="57"/>
    </location>
</feature>
<feature type="compositionally biased region" description="Basic and acidic residues" evidence="3">
    <location>
        <begin position="171"/>
        <end position="198"/>
    </location>
</feature>
<feature type="compositionally biased region" description="Basic and acidic residues" evidence="3">
    <location>
        <begin position="215"/>
        <end position="284"/>
    </location>
</feature>
<feature type="compositionally biased region" description="Basic and acidic residues" evidence="3">
    <location>
        <begin position="297"/>
        <end position="319"/>
    </location>
</feature>
<feature type="compositionally biased region" description="Low complexity" evidence="3">
    <location>
        <begin position="359"/>
        <end position="381"/>
    </location>
</feature>
<feature type="compositionally biased region" description="Basic and acidic residues" evidence="3">
    <location>
        <begin position="382"/>
        <end position="402"/>
    </location>
</feature>
<gene>
    <name type="primary">CWC25</name>
    <name type="ordered locus">CNBD4160</name>
</gene>
<organism>
    <name type="scientific">Cryptococcus neoformans var. neoformans serotype D (strain B-3501A)</name>
    <name type="common">Filobasidiella neoformans</name>
    <dbReference type="NCBI Taxonomy" id="283643"/>
    <lineage>
        <taxon>Eukaryota</taxon>
        <taxon>Fungi</taxon>
        <taxon>Dikarya</taxon>
        <taxon>Basidiomycota</taxon>
        <taxon>Agaricomycotina</taxon>
        <taxon>Tremellomycetes</taxon>
        <taxon>Tremellales</taxon>
        <taxon>Cryptococcaceae</taxon>
        <taxon>Cryptococcus</taxon>
        <taxon>Cryptococcus neoformans species complex</taxon>
    </lineage>
</organism>
<comment type="function">
    <text evidence="1">Involved in pre-mRNA splicing.</text>
</comment>
<comment type="subunit">
    <text evidence="1">Associated with the spliceosome.</text>
</comment>
<comment type="subcellular location">
    <subcellularLocation>
        <location evidence="1">Nucleus</location>
    </subcellularLocation>
</comment>
<comment type="similarity">
    <text evidence="4">Belongs to the CWC25 family.</text>
</comment>
<dbReference type="EMBL" id="AAEY01000021">
    <property type="protein sequence ID" value="EAL21040.1"/>
    <property type="molecule type" value="Genomic_DNA"/>
</dbReference>
<dbReference type="RefSeq" id="XP_775687.1">
    <property type="nucleotide sequence ID" value="XM_770594.1"/>
</dbReference>
<dbReference type="SMR" id="P0CM99"/>
<dbReference type="EnsemblFungi" id="AAW42990">
    <property type="protein sequence ID" value="AAW42990"/>
    <property type="gene ID" value="CND02200"/>
</dbReference>
<dbReference type="GeneID" id="4935805"/>
<dbReference type="KEGG" id="cnb:CNBD4160"/>
<dbReference type="VEuPathDB" id="FungiDB:CNBD4160"/>
<dbReference type="HOGENOM" id="CLU_025093_0_0_1"/>
<dbReference type="OrthoDB" id="9882at5206"/>
<dbReference type="GO" id="GO:0000974">
    <property type="term" value="C:Prp19 complex"/>
    <property type="evidence" value="ECO:0007669"/>
    <property type="project" value="EnsemblFungi"/>
</dbReference>
<dbReference type="GO" id="GO:0005684">
    <property type="term" value="C:U2-type spliceosomal complex"/>
    <property type="evidence" value="ECO:0007669"/>
    <property type="project" value="EnsemblFungi"/>
</dbReference>
<dbReference type="GO" id="GO:0000398">
    <property type="term" value="P:mRNA splicing, via spliceosome"/>
    <property type="evidence" value="ECO:0007669"/>
    <property type="project" value="TreeGrafter"/>
</dbReference>
<dbReference type="InterPro" id="IPR019339">
    <property type="entry name" value="CIR_N_dom"/>
</dbReference>
<dbReference type="InterPro" id="IPR022209">
    <property type="entry name" value="CWC25"/>
</dbReference>
<dbReference type="InterPro" id="IPR051376">
    <property type="entry name" value="CWC25_splicing_factor"/>
</dbReference>
<dbReference type="PANTHER" id="PTHR16196">
    <property type="entry name" value="CELL CYCLE CONTROL PROTEIN CWF25"/>
    <property type="match status" value="1"/>
</dbReference>
<dbReference type="PANTHER" id="PTHR16196:SF0">
    <property type="entry name" value="PRE-MRNA-SPLICING FACTOR CWC25 HOMOLOG"/>
    <property type="match status" value="1"/>
</dbReference>
<dbReference type="Pfam" id="PF10197">
    <property type="entry name" value="Cir_N"/>
    <property type="match status" value="1"/>
</dbReference>
<dbReference type="Pfam" id="PF12542">
    <property type="entry name" value="CWC25"/>
    <property type="match status" value="1"/>
</dbReference>
<dbReference type="SMART" id="SM01083">
    <property type="entry name" value="Cir_N"/>
    <property type="match status" value="1"/>
</dbReference>
<reference key="1">
    <citation type="journal article" date="2005" name="Science">
        <title>The genome of the basidiomycetous yeast and human pathogen Cryptococcus neoformans.</title>
        <authorList>
            <person name="Loftus B.J."/>
            <person name="Fung E."/>
            <person name="Roncaglia P."/>
            <person name="Rowley D."/>
            <person name="Amedeo P."/>
            <person name="Bruno D."/>
            <person name="Vamathevan J."/>
            <person name="Miranda M."/>
            <person name="Anderson I.J."/>
            <person name="Fraser J.A."/>
            <person name="Allen J.E."/>
            <person name="Bosdet I.E."/>
            <person name="Brent M.R."/>
            <person name="Chiu R."/>
            <person name="Doering T.L."/>
            <person name="Donlin M.J."/>
            <person name="D'Souza C.A."/>
            <person name="Fox D.S."/>
            <person name="Grinberg V."/>
            <person name="Fu J."/>
            <person name="Fukushima M."/>
            <person name="Haas B.J."/>
            <person name="Huang J.C."/>
            <person name="Janbon G."/>
            <person name="Jones S.J.M."/>
            <person name="Koo H.L."/>
            <person name="Krzywinski M.I."/>
            <person name="Kwon-Chung K.J."/>
            <person name="Lengeler K.B."/>
            <person name="Maiti R."/>
            <person name="Marra M.A."/>
            <person name="Marra R.E."/>
            <person name="Mathewson C.A."/>
            <person name="Mitchell T.G."/>
            <person name="Pertea M."/>
            <person name="Riggs F.R."/>
            <person name="Salzberg S.L."/>
            <person name="Schein J.E."/>
            <person name="Shvartsbeyn A."/>
            <person name="Shin H."/>
            <person name="Shumway M."/>
            <person name="Specht C.A."/>
            <person name="Suh B.B."/>
            <person name="Tenney A."/>
            <person name="Utterback T.R."/>
            <person name="Wickes B.L."/>
            <person name="Wortman J.R."/>
            <person name="Wye N.H."/>
            <person name="Kronstad J.W."/>
            <person name="Lodge J.K."/>
            <person name="Heitman J."/>
            <person name="Davis R.W."/>
            <person name="Fraser C.M."/>
            <person name="Hyman R.W."/>
        </authorList>
    </citation>
    <scope>NUCLEOTIDE SEQUENCE [LARGE SCALE GENOMIC DNA]</scope>
    <source>
        <strain>B-3501A</strain>
    </source>
</reference>
<accession>P0CM99</accession>
<accession>Q55TN7</accession>
<accession>Q5KIP8</accession>
<proteinExistence type="inferred from homology"/>
<sequence>MGGGDLNMKKSWHPVLLVNQERVWKAEKVANEEKKMLAQLRKEREEERQLEELHRLQEASTGKKRVEKLDWMYAAPSTEGGALGGARIGERDMEEYLLGKKRVDEVLGQGDKNIGAASREFIALQNANTARDTAAKIREDPLLAIKKQEQAALAALMNRPDIRKQLRAAKKAKETKGREGESKEERKARKRAEKEERRKSKHRYHDSRSPPSDYYDDRDHRRHRDSYDSQDRENRRTYRDRSDRSRTRSESPKREKKEKDYSNRDRDYRRRNDTTRGSFDESPRKGGGNRWGSHGPDGYRRSDHRDDGFRERQRGDRIPPPRHLSYNHSTPDVRPSSPPSSSAAPVNRNTSTLEDQRAARLAAMSASADELYSSRSKSLAARAEEERREQEKDEKMRQKYGKEQASANFFSQQSQLGLGEALQRRGGKGLLKDI</sequence>